<evidence type="ECO:0000255" key="1">
    <source>
        <dbReference type="HAMAP-Rule" id="MF_03180"/>
    </source>
</evidence>
<evidence type="ECO:0000269" key="2">
    <source>
    </source>
</evidence>
<sequence length="346" mass="37515">MGKPLIALGLEGSANKLGVGIILHDTNGSAKILANVRHTYITPPGQGFLPSDTAKHHRAWIIPLIKQAFAEAKISFKDIDCICFTKGPGIGAPLNSVALCARMLSLIHKKPLVAVNHCIGHIEMGREITGAQNPVVLYVSGGNTQVIAYSEKKYRIFGETLDIAIGNCLDRFARIIGLSNAPSPGYNIMQEAKKGKRFIELPYTVKGMDCSFSGLLSGVEAAATELLDPKNPSSVTKQDLCYSLQETGFAMLVEITERAMAHIRADSVLIVGGVGCNERLQQMMAEMSSDRGADVFSTDERFCIDNGIMIAQAGLLAYKTGDRCAVAESTITQRYRTDDVYISWRD</sequence>
<organism>
    <name type="scientific">Schizosaccharomyces pombe (strain 972 / ATCC 24843)</name>
    <name type="common">Fission yeast</name>
    <dbReference type="NCBI Taxonomy" id="284812"/>
    <lineage>
        <taxon>Eukaryota</taxon>
        <taxon>Fungi</taxon>
        <taxon>Dikarya</taxon>
        <taxon>Ascomycota</taxon>
        <taxon>Taphrinomycotina</taxon>
        <taxon>Schizosaccharomycetes</taxon>
        <taxon>Schizosaccharomycetales</taxon>
        <taxon>Schizosaccharomycetaceae</taxon>
        <taxon>Schizosaccharomyces</taxon>
    </lineage>
</organism>
<name>KAE1_SCHPO</name>
<proteinExistence type="inferred from homology"/>
<protein>
    <recommendedName>
        <fullName evidence="1">tRNA N6-adenosine threonylcarbamoyltransferase</fullName>
        <ecNumber evidence="1">2.3.1.234</ecNumber>
    </recommendedName>
    <alternativeName>
        <fullName>N6-L-threonylcarbamoyladenine synthase</fullName>
        <shortName>t(6)A synthase</shortName>
    </alternativeName>
    <alternativeName>
        <fullName>Pombe glycoprotease 2</fullName>
    </alternativeName>
    <alternativeName>
        <fullName evidence="1">t(6)A37 threonylcarbamoyladenosine biosynthesis protein kae1</fullName>
    </alternativeName>
    <alternativeName>
        <fullName evidence="1">tRNA threonylcarbamoyladenosine biosynthesis protein kae1</fullName>
    </alternativeName>
</protein>
<dbReference type="EC" id="2.3.1.234" evidence="1"/>
<dbReference type="EMBL" id="CU329671">
    <property type="protein sequence ID" value="CAB38507.1"/>
    <property type="molecule type" value="Genomic_DNA"/>
</dbReference>
<dbReference type="PIR" id="T39567">
    <property type="entry name" value="T39567"/>
</dbReference>
<dbReference type="RefSeq" id="NP_596498.1">
    <property type="nucleotide sequence ID" value="NM_001022419.2"/>
</dbReference>
<dbReference type="SMR" id="O94637"/>
<dbReference type="BioGRID" id="276678">
    <property type="interactions" value="1"/>
</dbReference>
<dbReference type="FunCoup" id="O94637">
    <property type="interactions" value="181"/>
</dbReference>
<dbReference type="STRING" id="284812.O94637"/>
<dbReference type="PaxDb" id="4896-SPBC16D10.03.1"/>
<dbReference type="DNASU" id="2540141"/>
<dbReference type="EnsemblFungi" id="SPBC16D10.03.1">
    <property type="protein sequence ID" value="SPBC16D10.03.1:pep"/>
    <property type="gene ID" value="SPBC16D10.03"/>
</dbReference>
<dbReference type="GeneID" id="2540141"/>
<dbReference type="KEGG" id="spo:2540141"/>
<dbReference type="PomBase" id="SPBC16D10.03">
    <property type="gene designation" value="pgp2"/>
</dbReference>
<dbReference type="VEuPathDB" id="FungiDB:SPBC16D10.03"/>
<dbReference type="eggNOG" id="KOG2708">
    <property type="taxonomic scope" value="Eukaryota"/>
</dbReference>
<dbReference type="HOGENOM" id="CLU_023208_2_2_1"/>
<dbReference type="InParanoid" id="O94637"/>
<dbReference type="OMA" id="HHRSWVV"/>
<dbReference type="PhylomeDB" id="O94637"/>
<dbReference type="PRO" id="PR:O94637"/>
<dbReference type="Proteomes" id="UP000002485">
    <property type="component" value="Chromosome II"/>
</dbReference>
<dbReference type="GO" id="GO:0005737">
    <property type="term" value="C:cytoplasm"/>
    <property type="evidence" value="ECO:0000318"/>
    <property type="project" value="GO_Central"/>
</dbReference>
<dbReference type="GO" id="GO:0005829">
    <property type="term" value="C:cytosol"/>
    <property type="evidence" value="ECO:0007005"/>
    <property type="project" value="PomBase"/>
</dbReference>
<dbReference type="GO" id="GO:0000408">
    <property type="term" value="C:EKC/KEOPS complex"/>
    <property type="evidence" value="ECO:0000318"/>
    <property type="project" value="GO_Central"/>
</dbReference>
<dbReference type="GO" id="GO:0005634">
    <property type="term" value="C:nucleus"/>
    <property type="evidence" value="ECO:0007005"/>
    <property type="project" value="PomBase"/>
</dbReference>
<dbReference type="GO" id="GO:0046872">
    <property type="term" value="F:metal ion binding"/>
    <property type="evidence" value="ECO:0007669"/>
    <property type="project" value="UniProtKB-KW"/>
</dbReference>
<dbReference type="GO" id="GO:0061711">
    <property type="term" value="F:N(6)-L-threonylcarbamoyladenine synthase activity"/>
    <property type="evidence" value="ECO:0000255"/>
    <property type="project" value="PomBase"/>
</dbReference>
<dbReference type="GO" id="GO:0002949">
    <property type="term" value="P:tRNA threonylcarbamoyladenosine modification"/>
    <property type="evidence" value="ECO:0000266"/>
    <property type="project" value="PomBase"/>
</dbReference>
<dbReference type="CDD" id="cd24132">
    <property type="entry name" value="ASKHA_NBD_OSGEP_like_euk"/>
    <property type="match status" value="1"/>
</dbReference>
<dbReference type="FunFam" id="3.30.420.40:FF:000141">
    <property type="entry name" value="Probable tRNA N6-adenosine threonylcarbamoyltransferase"/>
    <property type="match status" value="1"/>
</dbReference>
<dbReference type="FunFam" id="3.30.420.40:FF:000295">
    <property type="entry name" value="Probable tRNA N6-adenosine threonylcarbamoyltransferase"/>
    <property type="match status" value="1"/>
</dbReference>
<dbReference type="Gene3D" id="3.30.420.40">
    <property type="match status" value="2"/>
</dbReference>
<dbReference type="HAMAP" id="MF_01446">
    <property type="entry name" value="Kae1"/>
    <property type="match status" value="1"/>
</dbReference>
<dbReference type="InterPro" id="IPR043129">
    <property type="entry name" value="ATPase_NBD"/>
</dbReference>
<dbReference type="InterPro" id="IPR000905">
    <property type="entry name" value="Gcp-like_dom"/>
</dbReference>
<dbReference type="InterPro" id="IPR017861">
    <property type="entry name" value="KAE1/TsaD"/>
</dbReference>
<dbReference type="InterPro" id="IPR034680">
    <property type="entry name" value="Kae1_archaea_euk"/>
</dbReference>
<dbReference type="NCBIfam" id="TIGR03722">
    <property type="entry name" value="arch_KAE1"/>
    <property type="match status" value="1"/>
</dbReference>
<dbReference type="NCBIfam" id="TIGR00329">
    <property type="entry name" value="gcp_kae1"/>
    <property type="match status" value="1"/>
</dbReference>
<dbReference type="PANTHER" id="PTHR11735">
    <property type="entry name" value="TRNA N6-ADENOSINE THREONYLCARBAMOYLTRANSFERASE"/>
    <property type="match status" value="1"/>
</dbReference>
<dbReference type="PANTHER" id="PTHR11735:SF14">
    <property type="entry name" value="TRNA N6-ADENOSINE THREONYLCARBAMOYLTRANSFERASE"/>
    <property type="match status" value="1"/>
</dbReference>
<dbReference type="Pfam" id="PF00814">
    <property type="entry name" value="TsaD"/>
    <property type="match status" value="1"/>
</dbReference>
<dbReference type="PRINTS" id="PR00789">
    <property type="entry name" value="OSIALOPTASE"/>
</dbReference>
<dbReference type="SUPFAM" id="SSF53067">
    <property type="entry name" value="Actin-like ATPase domain"/>
    <property type="match status" value="1"/>
</dbReference>
<comment type="function">
    <text evidence="1">Component of the EKC/KEOPS complex that is required for the formation of a threonylcarbamoyl group on adenosine at position 37 (t(6)A37) in tRNAs that read codons beginning with adenine. The complex is probably involved in the transfer of the threonylcarbamoyl moiety of threonylcarbamoyl-AMP (TC-AMP) to the N6 group of A37. Pgp2 likely plays a direct catalytic role in this reaction, but requires other protein(s) of the complex to fulfill this activity. The EKC/KEOPS complex also promotes both telomere uncapping and telomere elongation. The complex is required for efficient recruitment of transcriptional coactivators.</text>
</comment>
<comment type="catalytic activity">
    <reaction evidence="1">
        <text>L-threonylcarbamoyladenylate + adenosine(37) in tRNA = N(6)-L-threonylcarbamoyladenosine(37) in tRNA + AMP + H(+)</text>
        <dbReference type="Rhea" id="RHEA:37059"/>
        <dbReference type="Rhea" id="RHEA-COMP:10162"/>
        <dbReference type="Rhea" id="RHEA-COMP:10163"/>
        <dbReference type="ChEBI" id="CHEBI:15378"/>
        <dbReference type="ChEBI" id="CHEBI:73682"/>
        <dbReference type="ChEBI" id="CHEBI:74411"/>
        <dbReference type="ChEBI" id="CHEBI:74418"/>
        <dbReference type="ChEBI" id="CHEBI:456215"/>
        <dbReference type="EC" id="2.3.1.234"/>
    </reaction>
</comment>
<comment type="cofactor">
    <cofactor evidence="1">
        <name>a divalent metal cation</name>
        <dbReference type="ChEBI" id="CHEBI:60240"/>
    </cofactor>
    <text evidence="1">Binds 1 divalent metal cation per subunit.</text>
</comment>
<comment type="subunit">
    <text evidence="1">Component of the EKC/KEOPS complex composed of at least SPAP27G11.07c/BUD32, cgi121, gon7, pgp2 and SPAC4H3.13/PCC1; the whole complex dimerizes.</text>
</comment>
<comment type="subcellular location">
    <subcellularLocation>
        <location evidence="1 2">Cytoplasm</location>
    </subcellularLocation>
    <subcellularLocation>
        <location evidence="1 2">Nucleus</location>
    </subcellularLocation>
</comment>
<comment type="similarity">
    <text evidence="1">Belongs to the KAE1 / TsaD family.</text>
</comment>
<accession>O94637</accession>
<keyword id="KW-0010">Activator</keyword>
<keyword id="KW-0012">Acyltransferase</keyword>
<keyword id="KW-0963">Cytoplasm</keyword>
<keyword id="KW-0479">Metal-binding</keyword>
<keyword id="KW-0539">Nucleus</keyword>
<keyword id="KW-1185">Reference proteome</keyword>
<keyword id="KW-0804">Transcription</keyword>
<keyword id="KW-0805">Transcription regulation</keyword>
<keyword id="KW-0808">Transferase</keyword>
<keyword id="KW-0819">tRNA processing</keyword>
<reference key="1">
    <citation type="journal article" date="2002" name="Nature">
        <title>The genome sequence of Schizosaccharomyces pombe.</title>
        <authorList>
            <person name="Wood V."/>
            <person name="Gwilliam R."/>
            <person name="Rajandream M.A."/>
            <person name="Lyne M.H."/>
            <person name="Lyne R."/>
            <person name="Stewart A."/>
            <person name="Sgouros J.G."/>
            <person name="Peat N."/>
            <person name="Hayles J."/>
            <person name="Baker S.G."/>
            <person name="Basham D."/>
            <person name="Bowman S."/>
            <person name="Brooks K."/>
            <person name="Brown D."/>
            <person name="Brown S."/>
            <person name="Chillingworth T."/>
            <person name="Churcher C.M."/>
            <person name="Collins M."/>
            <person name="Connor R."/>
            <person name="Cronin A."/>
            <person name="Davis P."/>
            <person name="Feltwell T."/>
            <person name="Fraser A."/>
            <person name="Gentles S."/>
            <person name="Goble A."/>
            <person name="Hamlin N."/>
            <person name="Harris D.E."/>
            <person name="Hidalgo J."/>
            <person name="Hodgson G."/>
            <person name="Holroyd S."/>
            <person name="Hornsby T."/>
            <person name="Howarth S."/>
            <person name="Huckle E.J."/>
            <person name="Hunt S."/>
            <person name="Jagels K."/>
            <person name="James K.D."/>
            <person name="Jones L."/>
            <person name="Jones M."/>
            <person name="Leather S."/>
            <person name="McDonald S."/>
            <person name="McLean J."/>
            <person name="Mooney P."/>
            <person name="Moule S."/>
            <person name="Mungall K.L."/>
            <person name="Murphy L.D."/>
            <person name="Niblett D."/>
            <person name="Odell C."/>
            <person name="Oliver K."/>
            <person name="O'Neil S."/>
            <person name="Pearson D."/>
            <person name="Quail M.A."/>
            <person name="Rabbinowitsch E."/>
            <person name="Rutherford K.M."/>
            <person name="Rutter S."/>
            <person name="Saunders D."/>
            <person name="Seeger K."/>
            <person name="Sharp S."/>
            <person name="Skelton J."/>
            <person name="Simmonds M.N."/>
            <person name="Squares R."/>
            <person name="Squares S."/>
            <person name="Stevens K."/>
            <person name="Taylor K."/>
            <person name="Taylor R.G."/>
            <person name="Tivey A."/>
            <person name="Walsh S.V."/>
            <person name="Warren T."/>
            <person name="Whitehead S."/>
            <person name="Woodward J.R."/>
            <person name="Volckaert G."/>
            <person name="Aert R."/>
            <person name="Robben J."/>
            <person name="Grymonprez B."/>
            <person name="Weltjens I."/>
            <person name="Vanstreels E."/>
            <person name="Rieger M."/>
            <person name="Schaefer M."/>
            <person name="Mueller-Auer S."/>
            <person name="Gabel C."/>
            <person name="Fuchs M."/>
            <person name="Duesterhoeft A."/>
            <person name="Fritzc C."/>
            <person name="Holzer E."/>
            <person name="Moestl D."/>
            <person name="Hilbert H."/>
            <person name="Borzym K."/>
            <person name="Langer I."/>
            <person name="Beck A."/>
            <person name="Lehrach H."/>
            <person name="Reinhardt R."/>
            <person name="Pohl T.M."/>
            <person name="Eger P."/>
            <person name="Zimmermann W."/>
            <person name="Wedler H."/>
            <person name="Wambutt R."/>
            <person name="Purnelle B."/>
            <person name="Goffeau A."/>
            <person name="Cadieu E."/>
            <person name="Dreano S."/>
            <person name="Gloux S."/>
            <person name="Lelaure V."/>
            <person name="Mottier S."/>
            <person name="Galibert F."/>
            <person name="Aves S.J."/>
            <person name="Xiang Z."/>
            <person name="Hunt C."/>
            <person name="Moore K."/>
            <person name="Hurst S.M."/>
            <person name="Lucas M."/>
            <person name="Rochet M."/>
            <person name="Gaillardin C."/>
            <person name="Tallada V.A."/>
            <person name="Garzon A."/>
            <person name="Thode G."/>
            <person name="Daga R.R."/>
            <person name="Cruzado L."/>
            <person name="Jimenez J."/>
            <person name="Sanchez M."/>
            <person name="del Rey F."/>
            <person name="Benito J."/>
            <person name="Dominguez A."/>
            <person name="Revuelta J.L."/>
            <person name="Moreno S."/>
            <person name="Armstrong J."/>
            <person name="Forsburg S.L."/>
            <person name="Cerutti L."/>
            <person name="Lowe T."/>
            <person name="McCombie W.R."/>
            <person name="Paulsen I."/>
            <person name="Potashkin J."/>
            <person name="Shpakovski G.V."/>
            <person name="Ussery D."/>
            <person name="Barrell B.G."/>
            <person name="Nurse P."/>
        </authorList>
    </citation>
    <scope>NUCLEOTIDE SEQUENCE [LARGE SCALE GENOMIC DNA]</scope>
    <source>
        <strain>972 / ATCC 24843</strain>
    </source>
</reference>
<reference key="2">
    <citation type="journal article" date="2000" name="Mol. Microbiol.">
        <title>Identification of proteases with shared functions to the proprotein processing protease Krp1 in the fission yeast Schizosaccharomyces pombe.</title>
        <authorList>
            <person name="Ladds G."/>
            <person name="Davey J."/>
        </authorList>
    </citation>
    <scope>GENE NAME</scope>
</reference>
<reference key="3">
    <citation type="journal article" date="2006" name="Nat. Biotechnol.">
        <title>ORFeome cloning and global analysis of protein localization in the fission yeast Schizosaccharomyces pombe.</title>
        <authorList>
            <person name="Matsuyama A."/>
            <person name="Arai R."/>
            <person name="Yashiroda Y."/>
            <person name="Shirai A."/>
            <person name="Kamata A."/>
            <person name="Sekido S."/>
            <person name="Kobayashi Y."/>
            <person name="Hashimoto A."/>
            <person name="Hamamoto M."/>
            <person name="Hiraoka Y."/>
            <person name="Horinouchi S."/>
            <person name="Yoshida M."/>
        </authorList>
    </citation>
    <scope>SUBCELLULAR LOCATION [LARGE SCALE ANALYSIS]</scope>
</reference>
<feature type="chain" id="PRO_0000255600" description="tRNA N6-adenosine threonylcarbamoyltransferase">
    <location>
        <begin position="1"/>
        <end position="346"/>
    </location>
</feature>
<feature type="binding site" evidence="1">
    <location>
        <position position="117"/>
    </location>
    <ligand>
        <name>a divalent metal cation</name>
        <dbReference type="ChEBI" id="CHEBI:60240"/>
    </ligand>
</feature>
<feature type="binding site" evidence="1">
    <location>
        <position position="121"/>
    </location>
    <ligand>
        <name>a divalent metal cation</name>
        <dbReference type="ChEBI" id="CHEBI:60240"/>
    </ligand>
</feature>
<feature type="binding site" evidence="1">
    <location>
        <begin position="138"/>
        <end position="142"/>
    </location>
    <ligand>
        <name>substrate</name>
    </ligand>
</feature>
<feature type="binding site" evidence="1">
    <location>
        <position position="138"/>
    </location>
    <ligand>
        <name>a divalent metal cation</name>
        <dbReference type="ChEBI" id="CHEBI:60240"/>
    </ligand>
</feature>
<feature type="binding site" evidence="1">
    <location>
        <position position="170"/>
    </location>
    <ligand>
        <name>substrate</name>
    </ligand>
</feature>
<feature type="binding site" evidence="1">
    <location>
        <position position="185"/>
    </location>
    <ligand>
        <name>substrate</name>
    </ligand>
</feature>
<feature type="binding site" evidence="1">
    <location>
        <position position="277"/>
    </location>
    <ligand>
        <name>substrate</name>
    </ligand>
</feature>
<feature type="binding site" evidence="1">
    <location>
        <position position="305"/>
    </location>
    <ligand>
        <name>a divalent metal cation</name>
        <dbReference type="ChEBI" id="CHEBI:60240"/>
    </ligand>
</feature>
<gene>
    <name type="primary">pgp2</name>
    <name type="synonym">kae1</name>
    <name type="ORF">SPBC16D10.03</name>
</gene>